<gene>
    <name type="primary">faeB</name>
    <name type="ORF">ACLA_083360</name>
</gene>
<dbReference type="EC" id="3.1.1.73" evidence="3"/>
<dbReference type="EMBL" id="DS027060">
    <property type="protein sequence ID" value="EAW06641.1"/>
    <property type="molecule type" value="Genomic_DNA"/>
</dbReference>
<dbReference type="RefSeq" id="XP_001268067.1">
    <property type="nucleotide sequence ID" value="XM_001268066.1"/>
</dbReference>
<dbReference type="SMR" id="A1CTK4"/>
<dbReference type="STRING" id="344612.A1CTK4"/>
<dbReference type="ESTHER" id="aspcl-faeb">
    <property type="family name" value="Tannase"/>
</dbReference>
<dbReference type="GlyCosmos" id="A1CTK4">
    <property type="glycosylation" value="4 sites, No reported glycans"/>
</dbReference>
<dbReference type="EnsemblFungi" id="EAW06641">
    <property type="protein sequence ID" value="EAW06641"/>
    <property type="gene ID" value="ACLA_083360"/>
</dbReference>
<dbReference type="GeneID" id="4700491"/>
<dbReference type="KEGG" id="act:ACLA_083360"/>
<dbReference type="VEuPathDB" id="FungiDB:ACLA_083360"/>
<dbReference type="eggNOG" id="ENOG502QPXZ">
    <property type="taxonomic scope" value="Eukaryota"/>
</dbReference>
<dbReference type="HOGENOM" id="CLU_014819_1_0_1"/>
<dbReference type="OMA" id="AWFPREY"/>
<dbReference type="OrthoDB" id="3039123at2759"/>
<dbReference type="Proteomes" id="UP000006701">
    <property type="component" value="Unassembled WGS sequence"/>
</dbReference>
<dbReference type="GO" id="GO:0005576">
    <property type="term" value="C:extracellular region"/>
    <property type="evidence" value="ECO:0007669"/>
    <property type="project" value="UniProtKB-SubCell"/>
</dbReference>
<dbReference type="GO" id="GO:0030600">
    <property type="term" value="F:feruloyl esterase activity"/>
    <property type="evidence" value="ECO:0007669"/>
    <property type="project" value="UniProtKB-EC"/>
</dbReference>
<dbReference type="GO" id="GO:0046872">
    <property type="term" value="F:metal ion binding"/>
    <property type="evidence" value="ECO:0007669"/>
    <property type="project" value="UniProtKB-KW"/>
</dbReference>
<dbReference type="GO" id="GO:0045493">
    <property type="term" value="P:xylan catabolic process"/>
    <property type="evidence" value="ECO:0007669"/>
    <property type="project" value="UniProtKB-KW"/>
</dbReference>
<dbReference type="Gene3D" id="3.40.50.1820">
    <property type="entry name" value="alpha/beta hydrolase"/>
    <property type="match status" value="1"/>
</dbReference>
<dbReference type="InterPro" id="IPR029058">
    <property type="entry name" value="AB_hydrolase_fold"/>
</dbReference>
<dbReference type="InterPro" id="IPR011118">
    <property type="entry name" value="Tannase/feruloyl_esterase"/>
</dbReference>
<dbReference type="PANTHER" id="PTHR33938">
    <property type="entry name" value="FERULOYL ESTERASE B-RELATED"/>
    <property type="match status" value="1"/>
</dbReference>
<dbReference type="PANTHER" id="PTHR33938:SF15">
    <property type="entry name" value="FERULOYL ESTERASE B-RELATED"/>
    <property type="match status" value="1"/>
</dbReference>
<dbReference type="Pfam" id="PF07519">
    <property type="entry name" value="Tannase"/>
    <property type="match status" value="1"/>
</dbReference>
<dbReference type="SUPFAM" id="SSF53474">
    <property type="entry name" value="alpha/beta-Hydrolases"/>
    <property type="match status" value="1"/>
</dbReference>
<organism>
    <name type="scientific">Aspergillus clavatus (strain ATCC 1007 / CBS 513.65 / DSM 816 / NCTC 3887 / NRRL 1 / QM 1276 / 107)</name>
    <dbReference type="NCBI Taxonomy" id="344612"/>
    <lineage>
        <taxon>Eukaryota</taxon>
        <taxon>Fungi</taxon>
        <taxon>Dikarya</taxon>
        <taxon>Ascomycota</taxon>
        <taxon>Pezizomycotina</taxon>
        <taxon>Eurotiomycetes</taxon>
        <taxon>Eurotiomycetidae</taxon>
        <taxon>Eurotiales</taxon>
        <taxon>Aspergillaceae</taxon>
        <taxon>Aspergillus</taxon>
        <taxon>Aspergillus subgen. Fumigati</taxon>
    </lineage>
</organism>
<protein>
    <recommendedName>
        <fullName>Probable feruloyl esterase B</fullName>
        <ecNumber evidence="3">3.1.1.73</ecNumber>
    </recommendedName>
    <alternativeName>
        <fullName>Ferulic acid esterase B</fullName>
        <shortName>FAEB</shortName>
    </alternativeName>
</protein>
<proteinExistence type="inferred from homology"/>
<feature type="signal peptide" evidence="4">
    <location>
        <begin position="1"/>
        <end position="18"/>
    </location>
</feature>
<feature type="chain" id="PRO_0000394933" description="Probable feruloyl esterase B">
    <location>
        <begin position="19"/>
        <end position="526"/>
    </location>
</feature>
<feature type="active site" description="Acyl-ester intermediate" evidence="2">
    <location>
        <position position="187"/>
    </location>
</feature>
<feature type="active site" description="Charge relay system" evidence="2">
    <location>
        <position position="400"/>
    </location>
</feature>
<feature type="active site" description="Charge relay system" evidence="2">
    <location>
        <position position="440"/>
    </location>
</feature>
<feature type="binding site" evidence="2">
    <location>
        <position position="256"/>
    </location>
    <ligand>
        <name>Ca(2+)</name>
        <dbReference type="ChEBI" id="CHEBI:29108"/>
    </ligand>
</feature>
<feature type="binding site" evidence="2">
    <location>
        <position position="259"/>
    </location>
    <ligand>
        <name>Ca(2+)</name>
        <dbReference type="ChEBI" id="CHEBI:29108"/>
    </ligand>
</feature>
<feature type="binding site" evidence="2">
    <location>
        <position position="261"/>
    </location>
    <ligand>
        <name>Ca(2+)</name>
        <dbReference type="ChEBI" id="CHEBI:29108"/>
    </ligand>
</feature>
<feature type="binding site" evidence="2">
    <location>
        <position position="263"/>
    </location>
    <ligand>
        <name>Ca(2+)</name>
        <dbReference type="ChEBI" id="CHEBI:29108"/>
    </ligand>
</feature>
<feature type="binding site" evidence="2">
    <location>
        <position position="265"/>
    </location>
    <ligand>
        <name>Ca(2+)</name>
        <dbReference type="ChEBI" id="CHEBI:29108"/>
    </ligand>
</feature>
<feature type="glycosylation site" description="N-linked (GlcNAc...) asparagine" evidence="4">
    <location>
        <position position="137"/>
    </location>
</feature>
<feature type="glycosylation site" description="N-linked (GlcNAc...) asparagine" evidence="4">
    <location>
        <position position="233"/>
    </location>
</feature>
<feature type="glycosylation site" description="N-linked (GlcNAc...) asparagine" evidence="4">
    <location>
        <position position="311"/>
    </location>
</feature>
<feature type="glycosylation site" description="N-linked (GlcNAc...) asparagine" evidence="4">
    <location>
        <position position="516"/>
    </location>
</feature>
<feature type="disulfide bond" evidence="2">
    <location>
        <begin position="27"/>
        <end position="74"/>
    </location>
</feature>
<feature type="disulfide bond" evidence="2">
    <location>
        <begin position="62"/>
        <end position="113"/>
    </location>
</feature>
<feature type="disulfide bond" evidence="2">
    <location>
        <begin position="186"/>
        <end position="441"/>
    </location>
</feature>
<feature type="disulfide bond" evidence="2">
    <location>
        <begin position="255"/>
        <end position="272"/>
    </location>
</feature>
<feature type="disulfide bond" evidence="2">
    <location>
        <begin position="281"/>
        <end position="291"/>
    </location>
</feature>
<feature type="disulfide bond" evidence="2">
    <location>
        <begin position="503"/>
        <end position="525"/>
    </location>
</feature>
<evidence type="ECO:0000250" key="1"/>
<evidence type="ECO:0000250" key="2">
    <source>
        <dbReference type="UniProtKB" id="Q2UP89"/>
    </source>
</evidence>
<evidence type="ECO:0000250" key="3">
    <source>
        <dbReference type="UniProtKB" id="Q8WZI8"/>
    </source>
</evidence>
<evidence type="ECO:0000255" key="4"/>
<evidence type="ECO:0000305" key="5"/>
<sequence>MARLSLLTLLALGSAALAKKDTFQTKCAALQHKVKLPNVHVNFVEYVPGGTNLDLPDNAPSCGASSQAVSTDMCRIAMAVDTSDSSQITLEAWFPRDYTGRFLSTGNGGLSGCIQYYDLAYAAGLGFATVGANNGHNGTSGEPFYQHPEVVEDFAHRSVHTGVVVGKQLTKLFYDKGFKKSYYLGCSTGGRQGFKSVQKYPKDFDGIVAGAPAFNFVNLISWSAYFYSLTGSNTSESYLSPAMWKIAHDEIVRQCDELDGAKDGIIEDTDLCHPRLETIICKPGAKDTANCLTGAQAKTVRDVLSPMYGVNGTLLYPRMQPGSEVYAAGIMYNGEPFQYSTDWYRYVVYNNPDWDDTKWSVEDAAAALAQNPYDIQTFDADISSFRGAGGKVLTYHGLQDQMISSDNSKLYYARVAETMKLPPSELDEFYRFFPVSGMTHCAGGDGAYGIGNGLGSYNGVDPENNVLMAMVQWVEKGIAPEFIRGAKFAEGPGSAVEYTRKHCRYPRRNVYKGPGNYTDENAWECV</sequence>
<accession>A1CTK4</accession>
<comment type="function">
    <text evidence="3">Involved in degradation of plant cell walls. Hydrolyzes the feruloyl-arabinose ester bond in arabinoxylans as well as the feruloyl-galactose and feruloyl-arabinose ester bonds in pectin.</text>
</comment>
<comment type="catalytic activity">
    <reaction evidence="3">
        <text>feruloyl-polysaccharide + H2O = ferulate + polysaccharide.</text>
        <dbReference type="EC" id="3.1.1.73"/>
    </reaction>
</comment>
<comment type="subcellular location">
    <subcellularLocation>
        <location evidence="1">Secreted</location>
    </subcellularLocation>
</comment>
<comment type="similarity">
    <text evidence="5">Belongs to the tannase family.</text>
</comment>
<reference key="1">
    <citation type="journal article" date="2008" name="PLoS Genet.">
        <title>Genomic islands in the pathogenic filamentous fungus Aspergillus fumigatus.</title>
        <authorList>
            <person name="Fedorova N.D."/>
            <person name="Khaldi N."/>
            <person name="Joardar V.S."/>
            <person name="Maiti R."/>
            <person name="Amedeo P."/>
            <person name="Anderson M.J."/>
            <person name="Crabtree J."/>
            <person name="Silva J.C."/>
            <person name="Badger J.H."/>
            <person name="Albarraq A."/>
            <person name="Angiuoli S."/>
            <person name="Bussey H."/>
            <person name="Bowyer P."/>
            <person name="Cotty P.J."/>
            <person name="Dyer P.S."/>
            <person name="Egan A."/>
            <person name="Galens K."/>
            <person name="Fraser-Liggett C.M."/>
            <person name="Haas B.J."/>
            <person name="Inman J.M."/>
            <person name="Kent R."/>
            <person name="Lemieux S."/>
            <person name="Malavazi I."/>
            <person name="Orvis J."/>
            <person name="Roemer T."/>
            <person name="Ronning C.M."/>
            <person name="Sundaram J.P."/>
            <person name="Sutton G."/>
            <person name="Turner G."/>
            <person name="Venter J.C."/>
            <person name="White O.R."/>
            <person name="Whitty B.R."/>
            <person name="Youngman P."/>
            <person name="Wolfe K.H."/>
            <person name="Goldman G.H."/>
            <person name="Wortman J.R."/>
            <person name="Jiang B."/>
            <person name="Denning D.W."/>
            <person name="Nierman W.C."/>
        </authorList>
    </citation>
    <scope>NUCLEOTIDE SEQUENCE [LARGE SCALE GENOMIC DNA]</scope>
    <source>
        <strain>ATCC 1007 / CBS 513.65 / DSM 816 / NCTC 3887 / NRRL 1 / QM 1276 / 107</strain>
    </source>
</reference>
<name>FAEB_ASPCL</name>
<keyword id="KW-0106">Calcium</keyword>
<keyword id="KW-0119">Carbohydrate metabolism</keyword>
<keyword id="KW-1015">Disulfide bond</keyword>
<keyword id="KW-0325">Glycoprotein</keyword>
<keyword id="KW-0378">Hydrolase</keyword>
<keyword id="KW-0479">Metal-binding</keyword>
<keyword id="KW-0624">Polysaccharide degradation</keyword>
<keyword id="KW-1185">Reference proteome</keyword>
<keyword id="KW-0964">Secreted</keyword>
<keyword id="KW-0719">Serine esterase</keyword>
<keyword id="KW-0732">Signal</keyword>
<keyword id="KW-0858">Xylan degradation</keyword>